<reference key="1">
    <citation type="submission" date="2007-06" db="EMBL/GenBank/DDBJ databases">
        <title>Complete sequence of Clostridium beijerinckii NCIMB 8052.</title>
        <authorList>
            <consortium name="US DOE Joint Genome Institute"/>
            <person name="Copeland A."/>
            <person name="Lucas S."/>
            <person name="Lapidus A."/>
            <person name="Barry K."/>
            <person name="Detter J.C."/>
            <person name="Glavina del Rio T."/>
            <person name="Hammon N."/>
            <person name="Israni S."/>
            <person name="Dalin E."/>
            <person name="Tice H."/>
            <person name="Pitluck S."/>
            <person name="Sims D."/>
            <person name="Brettin T."/>
            <person name="Bruce D."/>
            <person name="Tapia R."/>
            <person name="Brainard J."/>
            <person name="Schmutz J."/>
            <person name="Larimer F."/>
            <person name="Land M."/>
            <person name="Hauser L."/>
            <person name="Kyrpides N."/>
            <person name="Mikhailova N."/>
            <person name="Bennet G."/>
            <person name="Cann I."/>
            <person name="Chen J.-S."/>
            <person name="Contreras A.L."/>
            <person name="Jones D."/>
            <person name="Kashket E."/>
            <person name="Mitchell W."/>
            <person name="Stoddard S."/>
            <person name="Schwarz W."/>
            <person name="Qureshi N."/>
            <person name="Young M."/>
            <person name="Shi Z."/>
            <person name="Ezeji T."/>
            <person name="White B."/>
            <person name="Blaschek H."/>
            <person name="Richardson P."/>
        </authorList>
    </citation>
    <scope>NUCLEOTIDE SEQUENCE [LARGE SCALE GENOMIC DNA]</scope>
    <source>
        <strain>ATCC 51743 / NCIMB 8052</strain>
    </source>
</reference>
<keyword id="KW-0071">Autoinducer synthesis</keyword>
<keyword id="KW-0408">Iron</keyword>
<keyword id="KW-0456">Lyase</keyword>
<keyword id="KW-0479">Metal-binding</keyword>
<keyword id="KW-0673">Quorum sensing</keyword>
<sequence>MEKIASFTINHLELLPGVYVSRQDKFGDTVLTTFDIRMNRPNFEPTMNTAEMHAIEHLAATFLRNHKDYADKTVYFGPMGCRTGFYLILHGDYKSKDIVPLLTELYKFMAEFEGDIPGASAKDCGNYLDMNLPMAKYLANKFLNDILLNITEKNLVYPN</sequence>
<gene>
    <name evidence="1" type="primary">luxS</name>
    <name type="ordered locus">Cbei_1237</name>
</gene>
<protein>
    <recommendedName>
        <fullName evidence="1">S-ribosylhomocysteine lyase</fullName>
        <ecNumber evidence="1">4.4.1.21</ecNumber>
    </recommendedName>
    <alternativeName>
        <fullName evidence="1">AI-2 synthesis protein</fullName>
    </alternativeName>
    <alternativeName>
        <fullName evidence="1">Autoinducer-2 production protein LuxS</fullName>
    </alternativeName>
</protein>
<comment type="function">
    <text evidence="1">Involved in the synthesis of autoinducer 2 (AI-2) which is secreted by bacteria and is used to communicate both the cell density and the metabolic potential of the environment. The regulation of gene expression in response to changes in cell density is called quorum sensing. Catalyzes the transformation of S-ribosylhomocysteine (RHC) to homocysteine (HC) and 4,5-dihydroxy-2,3-pentadione (DPD).</text>
</comment>
<comment type="catalytic activity">
    <reaction evidence="1">
        <text>S-(5-deoxy-D-ribos-5-yl)-L-homocysteine = (S)-4,5-dihydroxypentane-2,3-dione + L-homocysteine</text>
        <dbReference type="Rhea" id="RHEA:17753"/>
        <dbReference type="ChEBI" id="CHEBI:29484"/>
        <dbReference type="ChEBI" id="CHEBI:58195"/>
        <dbReference type="ChEBI" id="CHEBI:58199"/>
        <dbReference type="EC" id="4.4.1.21"/>
    </reaction>
</comment>
<comment type="cofactor">
    <cofactor evidence="1">
        <name>Fe cation</name>
        <dbReference type="ChEBI" id="CHEBI:24875"/>
    </cofactor>
    <text evidence="1">Binds 1 Fe cation per subunit.</text>
</comment>
<comment type="subunit">
    <text evidence="1">Homodimer.</text>
</comment>
<comment type="similarity">
    <text evidence="1">Belongs to the LuxS family.</text>
</comment>
<dbReference type="EC" id="4.4.1.21" evidence="1"/>
<dbReference type="EMBL" id="CP000721">
    <property type="protein sequence ID" value="ABR33419.1"/>
    <property type="molecule type" value="Genomic_DNA"/>
</dbReference>
<dbReference type="RefSeq" id="WP_011968573.1">
    <property type="nucleotide sequence ID" value="NC_009617.1"/>
</dbReference>
<dbReference type="SMR" id="A6LST9"/>
<dbReference type="KEGG" id="cbe:Cbei_1237"/>
<dbReference type="eggNOG" id="COG1854">
    <property type="taxonomic scope" value="Bacteria"/>
</dbReference>
<dbReference type="HOGENOM" id="CLU_107531_1_0_9"/>
<dbReference type="Proteomes" id="UP000000565">
    <property type="component" value="Chromosome"/>
</dbReference>
<dbReference type="GO" id="GO:0005506">
    <property type="term" value="F:iron ion binding"/>
    <property type="evidence" value="ECO:0007669"/>
    <property type="project" value="InterPro"/>
</dbReference>
<dbReference type="GO" id="GO:0043768">
    <property type="term" value="F:S-ribosylhomocysteine lyase activity"/>
    <property type="evidence" value="ECO:0007669"/>
    <property type="project" value="UniProtKB-UniRule"/>
</dbReference>
<dbReference type="GO" id="GO:0009372">
    <property type="term" value="P:quorum sensing"/>
    <property type="evidence" value="ECO:0007669"/>
    <property type="project" value="UniProtKB-UniRule"/>
</dbReference>
<dbReference type="Gene3D" id="3.30.1360.80">
    <property type="entry name" value="S-ribosylhomocysteinase (LuxS)"/>
    <property type="match status" value="1"/>
</dbReference>
<dbReference type="HAMAP" id="MF_00091">
    <property type="entry name" value="LuxS"/>
    <property type="match status" value="1"/>
</dbReference>
<dbReference type="InterPro" id="IPR037005">
    <property type="entry name" value="LuxS_sf"/>
</dbReference>
<dbReference type="InterPro" id="IPR011249">
    <property type="entry name" value="Metalloenz_LuxS/M16"/>
</dbReference>
<dbReference type="InterPro" id="IPR003815">
    <property type="entry name" value="S-ribosylhomocysteinase"/>
</dbReference>
<dbReference type="NCBIfam" id="NF002604">
    <property type="entry name" value="PRK02260.1-4"/>
    <property type="match status" value="1"/>
</dbReference>
<dbReference type="PANTHER" id="PTHR35799">
    <property type="entry name" value="S-RIBOSYLHOMOCYSTEINE LYASE"/>
    <property type="match status" value="1"/>
</dbReference>
<dbReference type="PANTHER" id="PTHR35799:SF1">
    <property type="entry name" value="S-RIBOSYLHOMOCYSTEINE LYASE"/>
    <property type="match status" value="1"/>
</dbReference>
<dbReference type="Pfam" id="PF02664">
    <property type="entry name" value="LuxS"/>
    <property type="match status" value="1"/>
</dbReference>
<dbReference type="PIRSF" id="PIRSF006160">
    <property type="entry name" value="AI2"/>
    <property type="match status" value="1"/>
</dbReference>
<dbReference type="PRINTS" id="PR01487">
    <property type="entry name" value="LUXSPROTEIN"/>
</dbReference>
<dbReference type="SUPFAM" id="SSF63411">
    <property type="entry name" value="LuxS/MPP-like metallohydrolase"/>
    <property type="match status" value="1"/>
</dbReference>
<evidence type="ECO:0000255" key="1">
    <source>
        <dbReference type="HAMAP-Rule" id="MF_00091"/>
    </source>
</evidence>
<organism>
    <name type="scientific">Clostridium beijerinckii (strain ATCC 51743 / NCIMB 8052)</name>
    <name type="common">Clostridium acetobutylicum</name>
    <dbReference type="NCBI Taxonomy" id="290402"/>
    <lineage>
        <taxon>Bacteria</taxon>
        <taxon>Bacillati</taxon>
        <taxon>Bacillota</taxon>
        <taxon>Clostridia</taxon>
        <taxon>Eubacteriales</taxon>
        <taxon>Clostridiaceae</taxon>
        <taxon>Clostridium</taxon>
    </lineage>
</organism>
<accession>A6LST9</accession>
<feature type="chain" id="PRO_1000075452" description="S-ribosylhomocysteine lyase">
    <location>
        <begin position="1"/>
        <end position="159"/>
    </location>
</feature>
<feature type="binding site" evidence="1">
    <location>
        <position position="53"/>
    </location>
    <ligand>
        <name>Fe cation</name>
        <dbReference type="ChEBI" id="CHEBI:24875"/>
    </ligand>
</feature>
<feature type="binding site" evidence="1">
    <location>
        <position position="57"/>
    </location>
    <ligand>
        <name>Fe cation</name>
        <dbReference type="ChEBI" id="CHEBI:24875"/>
    </ligand>
</feature>
<feature type="binding site" evidence="1">
    <location>
        <position position="124"/>
    </location>
    <ligand>
        <name>Fe cation</name>
        <dbReference type="ChEBI" id="CHEBI:24875"/>
    </ligand>
</feature>
<proteinExistence type="inferred from homology"/>
<name>LUXS_CLOB8</name>